<comment type="function">
    <text evidence="1">Dephosphorylates 2-hydroxy-3-keto-5-methylthiopentenyl-1-phosphate (HK-MTPenyl-1-P) yielding 1,2-dihydroxy-3-keto-5-methylthiopentene (DHK-MTPene).</text>
</comment>
<comment type="catalytic activity">
    <reaction evidence="1">
        <text>2-hydroxy-5-methylsulfanyl-3-oxopent-1-enyl phosphate + H2O = 1,2-dihydroxy-5-(methylsulfanyl)pent-1-en-3-one + phosphate</text>
        <dbReference type="Rhea" id="RHEA:14481"/>
        <dbReference type="ChEBI" id="CHEBI:15377"/>
        <dbReference type="ChEBI" id="CHEBI:43474"/>
        <dbReference type="ChEBI" id="CHEBI:49252"/>
        <dbReference type="ChEBI" id="CHEBI:59505"/>
        <dbReference type="EC" id="3.1.3.87"/>
    </reaction>
</comment>
<comment type="pathway">
    <text evidence="1">Amino-acid biosynthesis; L-methionine biosynthesis via salvage pathway; L-methionine from S-methyl-5-thio-alpha-D-ribose 1-phosphate: step 4/6.</text>
</comment>
<comment type="similarity">
    <text evidence="1">Belongs to the HAD-like hydrolase superfamily. MtnX family.</text>
</comment>
<sequence>MKKPIVCCDFDGTITKNDNIIRIMKHFAPSEWTKLKDDVLTKEITIQEGVGQMFQLLKSDQKEAIQSFILEDTEIREGFKQFVDHVKKADIPFYVLSGGMDFFVYPILEGIVEREDIYCNHASFHEEHIQIEWPHACDSQCQNGCGCCKPSIIRELTRENDFIIMIGDSVTDVEAAKHADLTFARDYLLNECKELGLVHKEYETFIDLKAQFDQIKEVKEWQTKRTSAGRS</sequence>
<reference key="1">
    <citation type="journal article" date="2007" name="PLoS ONE">
        <title>Paradoxical DNA repair and peroxide resistance gene conservation in Bacillus pumilus SAFR-032.</title>
        <authorList>
            <person name="Gioia J."/>
            <person name="Yerrapragada S."/>
            <person name="Qin X."/>
            <person name="Jiang H."/>
            <person name="Igboeli O.C."/>
            <person name="Muzny D."/>
            <person name="Dugan-Rocha S."/>
            <person name="Ding Y."/>
            <person name="Hawes A."/>
            <person name="Liu W."/>
            <person name="Perez L."/>
            <person name="Kovar C."/>
            <person name="Dinh H."/>
            <person name="Lee S."/>
            <person name="Nazareth L."/>
            <person name="Blyth P."/>
            <person name="Holder M."/>
            <person name="Buhay C."/>
            <person name="Tirumalai M.R."/>
            <person name="Liu Y."/>
            <person name="Dasgupta I."/>
            <person name="Bokhetache L."/>
            <person name="Fujita M."/>
            <person name="Karouia F."/>
            <person name="Eswara Moorthy P."/>
            <person name="Siefert J."/>
            <person name="Uzman A."/>
            <person name="Buzumbo P."/>
            <person name="Verma A."/>
            <person name="Zwiya H."/>
            <person name="McWilliams B.D."/>
            <person name="Olowu A."/>
            <person name="Clinkenbeard K.D."/>
            <person name="Newcombe D."/>
            <person name="Golebiewski L."/>
            <person name="Petrosino J.F."/>
            <person name="Nicholson W.L."/>
            <person name="Fox G.E."/>
            <person name="Venkateswaran K."/>
            <person name="Highlander S.K."/>
            <person name="Weinstock G.M."/>
        </authorList>
    </citation>
    <scope>NUCLEOTIDE SEQUENCE [LARGE SCALE GENOMIC DNA]</scope>
    <source>
        <strain>SAFR-032</strain>
    </source>
</reference>
<organism>
    <name type="scientific">Bacillus pumilus (strain SAFR-032)</name>
    <dbReference type="NCBI Taxonomy" id="315750"/>
    <lineage>
        <taxon>Bacteria</taxon>
        <taxon>Bacillati</taxon>
        <taxon>Bacillota</taxon>
        <taxon>Bacilli</taxon>
        <taxon>Bacillales</taxon>
        <taxon>Bacillaceae</taxon>
        <taxon>Bacillus</taxon>
    </lineage>
</organism>
<feature type="chain" id="PRO_0000357482" description="2-hydroxy-3-keto-5-methylthiopentenyl-1-phosphate phosphatase">
    <location>
        <begin position="1"/>
        <end position="231"/>
    </location>
</feature>
<accession>A8FCG9</accession>
<evidence type="ECO:0000255" key="1">
    <source>
        <dbReference type="HAMAP-Rule" id="MF_01680"/>
    </source>
</evidence>
<dbReference type="EC" id="3.1.3.87" evidence="1"/>
<dbReference type="EMBL" id="CP000813">
    <property type="protein sequence ID" value="ABV61936.1"/>
    <property type="molecule type" value="Genomic_DNA"/>
</dbReference>
<dbReference type="RefSeq" id="WP_012009736.1">
    <property type="nucleotide sequence ID" value="NC_009848.4"/>
</dbReference>
<dbReference type="SMR" id="A8FCG9"/>
<dbReference type="STRING" id="315750.BPUM_1253"/>
<dbReference type="GeneID" id="5620516"/>
<dbReference type="KEGG" id="bpu:BPUM_1253"/>
<dbReference type="eggNOG" id="COG4359">
    <property type="taxonomic scope" value="Bacteria"/>
</dbReference>
<dbReference type="HOGENOM" id="CLU_058495_2_1_9"/>
<dbReference type="OrthoDB" id="9804940at2"/>
<dbReference type="UniPathway" id="UPA00904">
    <property type="reaction ID" value="UER00877"/>
</dbReference>
<dbReference type="Proteomes" id="UP000001355">
    <property type="component" value="Chromosome"/>
</dbReference>
<dbReference type="GO" id="GO:0005737">
    <property type="term" value="C:cytoplasm"/>
    <property type="evidence" value="ECO:0007669"/>
    <property type="project" value="TreeGrafter"/>
</dbReference>
<dbReference type="GO" id="GO:0043716">
    <property type="term" value="F:2-hydroxy-3-keto-5-methylthiopentenyl-1-phosphate phosphatase activity"/>
    <property type="evidence" value="ECO:0007669"/>
    <property type="project" value="UniProtKB-UniRule"/>
</dbReference>
<dbReference type="GO" id="GO:0036424">
    <property type="term" value="F:L-phosphoserine phosphatase activity"/>
    <property type="evidence" value="ECO:0007669"/>
    <property type="project" value="TreeGrafter"/>
</dbReference>
<dbReference type="GO" id="GO:0000287">
    <property type="term" value="F:magnesium ion binding"/>
    <property type="evidence" value="ECO:0007669"/>
    <property type="project" value="TreeGrafter"/>
</dbReference>
<dbReference type="GO" id="GO:0019509">
    <property type="term" value="P:L-methionine salvage from methylthioadenosine"/>
    <property type="evidence" value="ECO:0007669"/>
    <property type="project" value="UniProtKB-UniRule"/>
</dbReference>
<dbReference type="GO" id="GO:0006564">
    <property type="term" value="P:L-serine biosynthetic process"/>
    <property type="evidence" value="ECO:0007669"/>
    <property type="project" value="TreeGrafter"/>
</dbReference>
<dbReference type="CDD" id="cd07524">
    <property type="entry name" value="HAD_Pase"/>
    <property type="match status" value="1"/>
</dbReference>
<dbReference type="Gene3D" id="3.90.1470.20">
    <property type="match status" value="1"/>
</dbReference>
<dbReference type="Gene3D" id="3.40.50.1000">
    <property type="entry name" value="HAD superfamily/HAD-like"/>
    <property type="match status" value="1"/>
</dbReference>
<dbReference type="HAMAP" id="MF_01680">
    <property type="entry name" value="Salvage_MtnX"/>
    <property type="match status" value="1"/>
</dbReference>
<dbReference type="InterPro" id="IPR050582">
    <property type="entry name" value="HAD-like_SerB"/>
</dbReference>
<dbReference type="InterPro" id="IPR036412">
    <property type="entry name" value="HAD-like_sf"/>
</dbReference>
<dbReference type="InterPro" id="IPR017718">
    <property type="entry name" value="HAD-SF_hydro_IB_MtnX"/>
</dbReference>
<dbReference type="InterPro" id="IPR006384">
    <property type="entry name" value="HAD_hydro_PyrdxlP_Pase-like"/>
</dbReference>
<dbReference type="InterPro" id="IPR023214">
    <property type="entry name" value="HAD_sf"/>
</dbReference>
<dbReference type="NCBIfam" id="TIGR01489">
    <property type="entry name" value="DKMTPPase-SF"/>
    <property type="match status" value="1"/>
</dbReference>
<dbReference type="NCBIfam" id="TIGR01488">
    <property type="entry name" value="HAD-SF-IB"/>
    <property type="match status" value="1"/>
</dbReference>
<dbReference type="NCBIfam" id="NF007103">
    <property type="entry name" value="PRK09552.1"/>
    <property type="match status" value="1"/>
</dbReference>
<dbReference type="NCBIfam" id="TIGR03333">
    <property type="entry name" value="salvage_mtnX"/>
    <property type="match status" value="1"/>
</dbReference>
<dbReference type="PANTHER" id="PTHR43344">
    <property type="entry name" value="PHOSPHOSERINE PHOSPHATASE"/>
    <property type="match status" value="1"/>
</dbReference>
<dbReference type="PANTHER" id="PTHR43344:SF21">
    <property type="entry name" value="POLYOL PHOSPHATE PHOSPHATASE PYP1"/>
    <property type="match status" value="1"/>
</dbReference>
<dbReference type="Pfam" id="PF12710">
    <property type="entry name" value="HAD"/>
    <property type="match status" value="1"/>
</dbReference>
<dbReference type="SUPFAM" id="SSF56784">
    <property type="entry name" value="HAD-like"/>
    <property type="match status" value="1"/>
</dbReference>
<protein>
    <recommendedName>
        <fullName evidence="1">2-hydroxy-3-keto-5-methylthiopentenyl-1-phosphate phosphatase</fullName>
        <shortName evidence="1">HK-MTPenyl-1-P phosphatase</shortName>
        <ecNumber evidence="1">3.1.3.87</ecNumber>
    </recommendedName>
</protein>
<gene>
    <name evidence="1" type="primary">mtnX</name>
    <name type="ordered locus">BPUM_1253</name>
</gene>
<name>MTNX_BACP2</name>
<proteinExistence type="inferred from homology"/>
<keyword id="KW-0028">Amino-acid biosynthesis</keyword>
<keyword id="KW-0378">Hydrolase</keyword>
<keyword id="KW-0486">Methionine biosynthesis</keyword>